<gene>
    <name evidence="1" type="primary">rpmH</name>
    <name type="ordered locus">Spro_0031</name>
</gene>
<sequence length="46" mass="5396">MKRTFQPSVLKRNRSHGFRARMATKNGRQVLARRRAKGRSRLTVSK</sequence>
<keyword id="KW-0687">Ribonucleoprotein</keyword>
<keyword id="KW-0689">Ribosomal protein</keyword>
<name>RL34_SERP5</name>
<comment type="similarity">
    <text evidence="1">Belongs to the bacterial ribosomal protein bL34 family.</text>
</comment>
<proteinExistence type="inferred from homology"/>
<reference key="1">
    <citation type="submission" date="2007-09" db="EMBL/GenBank/DDBJ databases">
        <title>Complete sequence of chromosome of Serratia proteamaculans 568.</title>
        <authorList>
            <consortium name="US DOE Joint Genome Institute"/>
            <person name="Copeland A."/>
            <person name="Lucas S."/>
            <person name="Lapidus A."/>
            <person name="Barry K."/>
            <person name="Glavina del Rio T."/>
            <person name="Dalin E."/>
            <person name="Tice H."/>
            <person name="Pitluck S."/>
            <person name="Chain P."/>
            <person name="Malfatti S."/>
            <person name="Shin M."/>
            <person name="Vergez L."/>
            <person name="Schmutz J."/>
            <person name="Larimer F."/>
            <person name="Land M."/>
            <person name="Hauser L."/>
            <person name="Kyrpides N."/>
            <person name="Kim E."/>
            <person name="Taghavi S."/>
            <person name="Newman L."/>
            <person name="Vangronsveld J."/>
            <person name="van der Lelie D."/>
            <person name="Richardson P."/>
        </authorList>
    </citation>
    <scope>NUCLEOTIDE SEQUENCE [LARGE SCALE GENOMIC DNA]</scope>
    <source>
        <strain>568</strain>
    </source>
</reference>
<organism>
    <name type="scientific">Serratia proteamaculans (strain 568)</name>
    <dbReference type="NCBI Taxonomy" id="399741"/>
    <lineage>
        <taxon>Bacteria</taxon>
        <taxon>Pseudomonadati</taxon>
        <taxon>Pseudomonadota</taxon>
        <taxon>Gammaproteobacteria</taxon>
        <taxon>Enterobacterales</taxon>
        <taxon>Yersiniaceae</taxon>
        <taxon>Serratia</taxon>
    </lineage>
</organism>
<accession>A8G7Q1</accession>
<feature type="chain" id="PRO_1000060765" description="Large ribosomal subunit protein bL34">
    <location>
        <begin position="1"/>
        <end position="46"/>
    </location>
</feature>
<feature type="region of interest" description="Disordered" evidence="2">
    <location>
        <begin position="27"/>
        <end position="46"/>
    </location>
</feature>
<feature type="compositionally biased region" description="Basic residues" evidence="2">
    <location>
        <begin position="31"/>
        <end position="40"/>
    </location>
</feature>
<protein>
    <recommendedName>
        <fullName evidence="1">Large ribosomal subunit protein bL34</fullName>
    </recommendedName>
    <alternativeName>
        <fullName evidence="3">50S ribosomal protein L34</fullName>
    </alternativeName>
</protein>
<dbReference type="EMBL" id="CP000826">
    <property type="protein sequence ID" value="ABV39141.1"/>
    <property type="molecule type" value="Genomic_DNA"/>
</dbReference>
<dbReference type="SMR" id="A8G7Q1"/>
<dbReference type="STRING" id="399741.Spro_0031"/>
<dbReference type="KEGG" id="spe:Spro_0031"/>
<dbReference type="eggNOG" id="COG0230">
    <property type="taxonomic scope" value="Bacteria"/>
</dbReference>
<dbReference type="HOGENOM" id="CLU_129938_2_1_6"/>
<dbReference type="OrthoDB" id="9804164at2"/>
<dbReference type="GO" id="GO:1990904">
    <property type="term" value="C:ribonucleoprotein complex"/>
    <property type="evidence" value="ECO:0007669"/>
    <property type="project" value="UniProtKB-KW"/>
</dbReference>
<dbReference type="GO" id="GO:0005840">
    <property type="term" value="C:ribosome"/>
    <property type="evidence" value="ECO:0007669"/>
    <property type="project" value="UniProtKB-KW"/>
</dbReference>
<dbReference type="GO" id="GO:0003735">
    <property type="term" value="F:structural constituent of ribosome"/>
    <property type="evidence" value="ECO:0007669"/>
    <property type="project" value="InterPro"/>
</dbReference>
<dbReference type="GO" id="GO:0006412">
    <property type="term" value="P:translation"/>
    <property type="evidence" value="ECO:0007669"/>
    <property type="project" value="UniProtKB-UniRule"/>
</dbReference>
<dbReference type="FunFam" id="1.10.287.3980:FF:000001">
    <property type="entry name" value="Mitochondrial ribosomal protein L34"/>
    <property type="match status" value="1"/>
</dbReference>
<dbReference type="Gene3D" id="1.10.287.3980">
    <property type="match status" value="1"/>
</dbReference>
<dbReference type="HAMAP" id="MF_00391">
    <property type="entry name" value="Ribosomal_bL34"/>
    <property type="match status" value="1"/>
</dbReference>
<dbReference type="InterPro" id="IPR000271">
    <property type="entry name" value="Ribosomal_bL34"/>
</dbReference>
<dbReference type="InterPro" id="IPR020939">
    <property type="entry name" value="Ribosomal_bL34_CS"/>
</dbReference>
<dbReference type="NCBIfam" id="TIGR01030">
    <property type="entry name" value="rpmH_bact"/>
    <property type="match status" value="1"/>
</dbReference>
<dbReference type="PANTHER" id="PTHR14503:SF4">
    <property type="entry name" value="LARGE RIBOSOMAL SUBUNIT PROTEIN BL34M"/>
    <property type="match status" value="1"/>
</dbReference>
<dbReference type="PANTHER" id="PTHR14503">
    <property type="entry name" value="MITOCHONDRIAL RIBOSOMAL PROTEIN 34 FAMILY MEMBER"/>
    <property type="match status" value="1"/>
</dbReference>
<dbReference type="Pfam" id="PF00468">
    <property type="entry name" value="Ribosomal_L34"/>
    <property type="match status" value="1"/>
</dbReference>
<dbReference type="PROSITE" id="PS00784">
    <property type="entry name" value="RIBOSOMAL_L34"/>
    <property type="match status" value="1"/>
</dbReference>
<evidence type="ECO:0000255" key="1">
    <source>
        <dbReference type="HAMAP-Rule" id="MF_00391"/>
    </source>
</evidence>
<evidence type="ECO:0000256" key="2">
    <source>
        <dbReference type="SAM" id="MobiDB-lite"/>
    </source>
</evidence>
<evidence type="ECO:0000305" key="3"/>